<reference key="1">
    <citation type="journal article" date="2006" name="FEBS J.">
        <title>Patatins, Kunitz protease inhibitors and other major proteins in tuber of potato cv. Kuras.</title>
        <authorList>
            <person name="Bauw G."/>
            <person name="Nielsen H.V."/>
            <person name="Emmersen J."/>
            <person name="Nielsen K.L."/>
            <person name="Joergensen M."/>
            <person name="Welinder K.G."/>
        </authorList>
    </citation>
    <scope>NUCLEOTIDE SEQUENCE [MRNA]</scope>
    <source>
        <strain>cv. Kuras</strain>
        <tissue>Tuber</tissue>
    </source>
</reference>
<feature type="signal peptide" evidence="2">
    <location>
        <begin position="1"/>
        <end position="11"/>
    </location>
</feature>
<feature type="chain" id="PRO_0000296712" description="Patatin-2-Kuras 4">
    <location>
        <begin position="12"/>
        <end position="374"/>
    </location>
</feature>
<feature type="domain" description="PNPLA" evidence="3">
    <location>
        <begin position="20"/>
        <end position="217"/>
    </location>
</feature>
<feature type="coiled-coil region" evidence="2">
    <location>
        <begin position="309"/>
        <end position="372"/>
    </location>
</feature>
<feature type="short sequence motif" description="GXGXXG" evidence="3">
    <location>
        <begin position="24"/>
        <end position="29"/>
    </location>
</feature>
<feature type="short sequence motif" description="GXSXG" evidence="3">
    <location>
        <begin position="63"/>
        <end position="67"/>
    </location>
</feature>
<feature type="short sequence motif" description="DGA/G" evidence="3">
    <location>
        <begin position="203"/>
        <end position="205"/>
    </location>
</feature>
<feature type="active site" description="Nucleophile" evidence="3">
    <location>
        <position position="65"/>
    </location>
</feature>
<feature type="active site" description="Proton acceptor" evidence="3">
    <location>
        <position position="203"/>
    </location>
</feature>
<feature type="glycosylation site" description="N-linked (GlcNAc...) asparagine" evidence="2">
    <location>
        <position position="103"/>
    </location>
</feature>
<gene>
    <name type="primary">pat2-k4</name>
</gene>
<evidence type="ECO:0000250" key="1"/>
<evidence type="ECO:0000255" key="2"/>
<evidence type="ECO:0000255" key="3">
    <source>
        <dbReference type="PROSITE-ProRule" id="PRU01161"/>
    </source>
</evidence>
<evidence type="ECO:0000305" key="4"/>
<accession>Q3YJT0</accession>
<organism>
    <name type="scientific">Solanum tuberosum</name>
    <name type="common">Potato</name>
    <dbReference type="NCBI Taxonomy" id="4113"/>
    <lineage>
        <taxon>Eukaryota</taxon>
        <taxon>Viridiplantae</taxon>
        <taxon>Streptophyta</taxon>
        <taxon>Embryophyta</taxon>
        <taxon>Tracheophyta</taxon>
        <taxon>Spermatophyta</taxon>
        <taxon>Magnoliopsida</taxon>
        <taxon>eudicotyledons</taxon>
        <taxon>Gunneridae</taxon>
        <taxon>Pentapetalae</taxon>
        <taxon>asterids</taxon>
        <taxon>lamiids</taxon>
        <taxon>Solanales</taxon>
        <taxon>Solanaceae</taxon>
        <taxon>Solanoideae</taxon>
        <taxon>Solaneae</taxon>
        <taxon>Solanum</taxon>
    </lineage>
</organism>
<keyword id="KW-0175">Coiled coil</keyword>
<keyword id="KW-0325">Glycoprotein</keyword>
<keyword id="KW-0378">Hydrolase</keyword>
<keyword id="KW-0442">Lipid degradation</keyword>
<keyword id="KW-0443">Lipid metabolism</keyword>
<keyword id="KW-0611">Plant defense</keyword>
<keyword id="KW-1185">Reference proteome</keyword>
<keyword id="KW-0732">Signal</keyword>
<keyword id="KW-0758">Storage protein</keyword>
<keyword id="KW-0926">Vacuole</keyword>
<protein>
    <recommendedName>
        <fullName>Patatin-2-Kuras 4</fullName>
        <ecNumber>3.1.1.-</ecNumber>
    </recommendedName>
</protein>
<dbReference type="EC" id="3.1.1.-"/>
<dbReference type="EMBL" id="DQ114420">
    <property type="protein sequence ID" value="AAZ75961.1"/>
    <property type="molecule type" value="mRNA"/>
</dbReference>
<dbReference type="SMR" id="Q3YJT0"/>
<dbReference type="GlyCosmos" id="Q3YJT0">
    <property type="glycosylation" value="1 site, No reported glycans"/>
</dbReference>
<dbReference type="PaxDb" id="4113-PGSC0003DMT400036586"/>
<dbReference type="InParanoid" id="Q3YJT0"/>
<dbReference type="Proteomes" id="UP000011115">
    <property type="component" value="Unassembled WGS sequence"/>
</dbReference>
<dbReference type="ExpressionAtlas" id="Q3YJT0">
    <property type="expression patterns" value="baseline"/>
</dbReference>
<dbReference type="GO" id="GO:0005773">
    <property type="term" value="C:vacuole"/>
    <property type="evidence" value="ECO:0007669"/>
    <property type="project" value="UniProtKB-SubCell"/>
</dbReference>
<dbReference type="GO" id="GO:0047372">
    <property type="term" value="F:monoacylglycerol lipase activity"/>
    <property type="evidence" value="ECO:0000318"/>
    <property type="project" value="GO_Central"/>
</dbReference>
<dbReference type="GO" id="GO:0045735">
    <property type="term" value="F:nutrient reservoir activity"/>
    <property type="evidence" value="ECO:0007669"/>
    <property type="project" value="UniProtKB-KW"/>
</dbReference>
<dbReference type="GO" id="GO:0004620">
    <property type="term" value="F:phospholipase activity"/>
    <property type="evidence" value="ECO:0000318"/>
    <property type="project" value="GO_Central"/>
</dbReference>
<dbReference type="GO" id="GO:0006952">
    <property type="term" value="P:defense response"/>
    <property type="evidence" value="ECO:0007669"/>
    <property type="project" value="UniProtKB-KW"/>
</dbReference>
<dbReference type="GO" id="GO:0016042">
    <property type="term" value="P:lipid catabolic process"/>
    <property type="evidence" value="ECO:0007669"/>
    <property type="project" value="UniProtKB-KW"/>
</dbReference>
<dbReference type="Gene3D" id="3.40.1090.10">
    <property type="entry name" value="Cytosolic phospholipase A2 catalytic domain"/>
    <property type="match status" value="1"/>
</dbReference>
<dbReference type="InterPro" id="IPR016035">
    <property type="entry name" value="Acyl_Trfase/lysoPLipase"/>
</dbReference>
<dbReference type="InterPro" id="IPR002641">
    <property type="entry name" value="PNPLA_dom"/>
</dbReference>
<dbReference type="PANTHER" id="PTHR32176:SF85">
    <property type="entry name" value="PATATIN GROUP D-2"/>
    <property type="match status" value="1"/>
</dbReference>
<dbReference type="PANTHER" id="PTHR32176">
    <property type="entry name" value="XYLOSE ISOMERASE"/>
    <property type="match status" value="1"/>
</dbReference>
<dbReference type="Pfam" id="PF01734">
    <property type="entry name" value="Patatin"/>
    <property type="match status" value="1"/>
</dbReference>
<dbReference type="SUPFAM" id="SSF52151">
    <property type="entry name" value="FabD/lysophospholipase-like"/>
    <property type="match status" value="1"/>
</dbReference>
<dbReference type="PROSITE" id="PS51635">
    <property type="entry name" value="PNPLA"/>
    <property type="match status" value="1"/>
</dbReference>
<name>PT2K4_SOLTU</name>
<comment type="function">
    <text evidence="1">Probable lipolytic acyl hydrolase (LAH), an activity which is thought to be involved in the response of tubers to pathogens.</text>
</comment>
<comment type="subcellular location">
    <subcellularLocation>
        <location evidence="1">Vacuole</location>
    </subcellularLocation>
</comment>
<comment type="domain">
    <text>The nitrogen atoms of the two glycine residues in the GGXR motif define the oxyanion hole, and stabilize the oxyanion that forms during the nucleophilic attack by the catalytic serine during substrate cleavage.</text>
</comment>
<comment type="miscellaneous">
    <text>Patatin have a dual role as a somatic storage protein and as an enzyme involved in host resistance.</text>
</comment>
<comment type="similarity">
    <text evidence="4">Belongs to the patatin family.</text>
</comment>
<sequence>MILATTSSTCATLGEMVTVLSIDGGGIKGIIPAIILEFLEGQLQEVDNNADARLADYFDVIGGTSTGGLLTAMITTPNENNRPFAAAKDIVPFYFEHGPHIFNYSGSILGPMYDGKYLLQVLQEKLGETRVHQALTEVAISSFDIKTNKPVIFTKSNLAESPQLDAKMYDICYSTAAAPIYFPPHYFVTHTSNGDRYEFNLVDGGVATVGDPALLSLSVATKLAQVDPKFASIKSLDYKQMLLLSLGTGTNSEFDKTYTAQETAKWGPLRWMLAIQQMTNAASSYMTDYYISTVFQARHSQNNYLRVQENALTGTTTEMDDASEANMELLVQVGETLLKKPVSKDSPETYEEALKRFAKLLSDRKKLRANKASY</sequence>
<proteinExistence type="evidence at transcript level"/>